<comment type="subunit">
    <text evidence="1">Part of the 50S ribosomal subunit.</text>
</comment>
<comment type="similarity">
    <text evidence="1">Belongs to the bacterial ribosomal protein bL31 family. Type B subfamily.</text>
</comment>
<sequence>MKPNIHPEYRTVVFHDTSVDEYFKIGSTIKTDREIELDGVTYPYVTIDVSSKSHPFYTGKLRTVASEGNVARFTQRFGRFVSTKKGA</sequence>
<evidence type="ECO:0000255" key="1">
    <source>
        <dbReference type="HAMAP-Rule" id="MF_00502"/>
    </source>
</evidence>
<evidence type="ECO:0000305" key="2"/>
<protein>
    <recommendedName>
        <fullName evidence="1">Large ribosomal subunit protein bL31B</fullName>
    </recommendedName>
    <alternativeName>
        <fullName evidence="2">50S ribosomal protein L31 type B</fullName>
    </alternativeName>
</protein>
<proteinExistence type="inferred from homology"/>
<organism>
    <name type="scientific">Escherichia coli O17:K52:H18 (strain UMN026 / ExPEC)</name>
    <dbReference type="NCBI Taxonomy" id="585056"/>
    <lineage>
        <taxon>Bacteria</taxon>
        <taxon>Pseudomonadati</taxon>
        <taxon>Pseudomonadota</taxon>
        <taxon>Gammaproteobacteria</taxon>
        <taxon>Enterobacterales</taxon>
        <taxon>Enterobacteriaceae</taxon>
        <taxon>Escherichia</taxon>
    </lineage>
</organism>
<reference key="1">
    <citation type="journal article" date="2009" name="PLoS Genet.">
        <title>Organised genome dynamics in the Escherichia coli species results in highly diverse adaptive paths.</title>
        <authorList>
            <person name="Touchon M."/>
            <person name="Hoede C."/>
            <person name="Tenaillon O."/>
            <person name="Barbe V."/>
            <person name="Baeriswyl S."/>
            <person name="Bidet P."/>
            <person name="Bingen E."/>
            <person name="Bonacorsi S."/>
            <person name="Bouchier C."/>
            <person name="Bouvet O."/>
            <person name="Calteau A."/>
            <person name="Chiapello H."/>
            <person name="Clermont O."/>
            <person name="Cruveiller S."/>
            <person name="Danchin A."/>
            <person name="Diard M."/>
            <person name="Dossat C."/>
            <person name="Karoui M.E."/>
            <person name="Frapy E."/>
            <person name="Garry L."/>
            <person name="Ghigo J.M."/>
            <person name="Gilles A.M."/>
            <person name="Johnson J."/>
            <person name="Le Bouguenec C."/>
            <person name="Lescat M."/>
            <person name="Mangenot S."/>
            <person name="Martinez-Jehanne V."/>
            <person name="Matic I."/>
            <person name="Nassif X."/>
            <person name="Oztas S."/>
            <person name="Petit M.A."/>
            <person name="Pichon C."/>
            <person name="Rouy Z."/>
            <person name="Ruf C.S."/>
            <person name="Schneider D."/>
            <person name="Tourret J."/>
            <person name="Vacherie B."/>
            <person name="Vallenet D."/>
            <person name="Medigue C."/>
            <person name="Rocha E.P.C."/>
            <person name="Denamur E."/>
        </authorList>
    </citation>
    <scope>NUCLEOTIDE SEQUENCE [LARGE SCALE GENOMIC DNA]</scope>
    <source>
        <strain>UMN026 / ExPEC</strain>
    </source>
</reference>
<dbReference type="EMBL" id="CU928163">
    <property type="protein sequence ID" value="CAR11544.1"/>
    <property type="molecule type" value="Genomic_DNA"/>
</dbReference>
<dbReference type="RefSeq" id="WP_000803998.1">
    <property type="nucleotide sequence ID" value="NC_011751.1"/>
</dbReference>
<dbReference type="RefSeq" id="YP_002411094.1">
    <property type="nucleotide sequence ID" value="NC_011751.1"/>
</dbReference>
<dbReference type="SMR" id="B7N8J3"/>
<dbReference type="STRING" id="585056.ECUMN_0329"/>
<dbReference type="KEGG" id="eum:ECUMN_0329"/>
<dbReference type="PATRIC" id="fig|585056.7.peg.527"/>
<dbReference type="HOGENOM" id="CLU_114306_2_1_6"/>
<dbReference type="Proteomes" id="UP000007097">
    <property type="component" value="Chromosome"/>
</dbReference>
<dbReference type="GO" id="GO:1990904">
    <property type="term" value="C:ribonucleoprotein complex"/>
    <property type="evidence" value="ECO:0007669"/>
    <property type="project" value="UniProtKB-KW"/>
</dbReference>
<dbReference type="GO" id="GO:0005840">
    <property type="term" value="C:ribosome"/>
    <property type="evidence" value="ECO:0007669"/>
    <property type="project" value="UniProtKB-KW"/>
</dbReference>
<dbReference type="GO" id="GO:0003735">
    <property type="term" value="F:structural constituent of ribosome"/>
    <property type="evidence" value="ECO:0007669"/>
    <property type="project" value="InterPro"/>
</dbReference>
<dbReference type="GO" id="GO:0006412">
    <property type="term" value="P:translation"/>
    <property type="evidence" value="ECO:0007669"/>
    <property type="project" value="UniProtKB-UniRule"/>
</dbReference>
<dbReference type="FunFam" id="4.10.830.30:FF:000002">
    <property type="entry name" value="50S ribosomal protein L31 type B"/>
    <property type="match status" value="1"/>
</dbReference>
<dbReference type="Gene3D" id="4.10.830.30">
    <property type="entry name" value="Ribosomal protein L31"/>
    <property type="match status" value="1"/>
</dbReference>
<dbReference type="HAMAP" id="MF_00502">
    <property type="entry name" value="Ribosomal_bL31_2"/>
    <property type="match status" value="1"/>
</dbReference>
<dbReference type="InterPro" id="IPR034704">
    <property type="entry name" value="Ribosomal_bL28/bL31-like_sf"/>
</dbReference>
<dbReference type="InterPro" id="IPR002150">
    <property type="entry name" value="Ribosomal_bL31"/>
</dbReference>
<dbReference type="InterPro" id="IPR027493">
    <property type="entry name" value="Ribosomal_bL31_B"/>
</dbReference>
<dbReference type="InterPro" id="IPR042105">
    <property type="entry name" value="Ribosomal_bL31_sf"/>
</dbReference>
<dbReference type="NCBIfam" id="TIGR00105">
    <property type="entry name" value="L31"/>
    <property type="match status" value="1"/>
</dbReference>
<dbReference type="NCBIfam" id="NF002462">
    <property type="entry name" value="PRK01678.1"/>
    <property type="match status" value="1"/>
</dbReference>
<dbReference type="PANTHER" id="PTHR33280">
    <property type="entry name" value="50S RIBOSOMAL PROTEIN L31, CHLOROPLASTIC"/>
    <property type="match status" value="1"/>
</dbReference>
<dbReference type="PANTHER" id="PTHR33280:SF1">
    <property type="entry name" value="LARGE RIBOSOMAL SUBUNIT PROTEIN BL31C"/>
    <property type="match status" value="1"/>
</dbReference>
<dbReference type="Pfam" id="PF01197">
    <property type="entry name" value="Ribosomal_L31"/>
    <property type="match status" value="1"/>
</dbReference>
<dbReference type="PRINTS" id="PR01249">
    <property type="entry name" value="RIBOSOMALL31"/>
</dbReference>
<dbReference type="SUPFAM" id="SSF143800">
    <property type="entry name" value="L28p-like"/>
    <property type="match status" value="1"/>
</dbReference>
<dbReference type="PROSITE" id="PS01143">
    <property type="entry name" value="RIBOSOMAL_L31"/>
    <property type="match status" value="1"/>
</dbReference>
<accession>B7N8J3</accession>
<feature type="chain" id="PRO_1000126806" description="Large ribosomal subunit protein bL31B">
    <location>
        <begin position="1"/>
        <end position="87"/>
    </location>
</feature>
<gene>
    <name evidence="1" type="primary">rpmE2</name>
    <name type="ordered locus">ECUMN_0329</name>
</gene>
<keyword id="KW-0687">Ribonucleoprotein</keyword>
<keyword id="KW-0689">Ribosomal protein</keyword>
<name>RL31B_ECOLU</name>